<keyword id="KW-0458">Lysosome</keyword>
<keyword id="KW-1185">Reference proteome</keyword>
<protein>
    <recommendedName>
        <fullName>Ragulator complex protein LAMTOR4 homolog</fullName>
    </recommendedName>
    <alternativeName>
        <fullName>Late endosomal/lysosomal adaptor and MAPK and MTOR activator 4</fullName>
    </alternativeName>
</protein>
<proteinExistence type="inferred from homology"/>
<sequence>MAGSTYGLDKIAGVQGYLVVNPDGAVLASSGDLENDEKTAGVIVDMLQTASMIPLSGDSSHSLKRLSVHFGNFVLMATVTNQRIFIVKRPTTETE</sequence>
<dbReference type="EMBL" id="DS469588">
    <property type="protein sequence ID" value="EDO40683.1"/>
    <property type="molecule type" value="Genomic_DNA"/>
</dbReference>
<dbReference type="SMR" id="A7S6M8"/>
<dbReference type="STRING" id="45351.A7S6M8"/>
<dbReference type="EnsemblMetazoa" id="EDO40683">
    <property type="protein sequence ID" value="EDO40683"/>
    <property type="gene ID" value="NEMVEDRAFT_v1g232793"/>
</dbReference>
<dbReference type="KEGG" id="nve:5512379"/>
<dbReference type="eggNOG" id="ENOG502S3B2">
    <property type="taxonomic scope" value="Eukaryota"/>
</dbReference>
<dbReference type="HOGENOM" id="CLU_137556_1_0_1"/>
<dbReference type="InParanoid" id="A7S6M8"/>
<dbReference type="OMA" id="MEMVRTA"/>
<dbReference type="OrthoDB" id="275011at2759"/>
<dbReference type="PhylomeDB" id="A7S6M8"/>
<dbReference type="Proteomes" id="UP000001593">
    <property type="component" value="Unassembled WGS sequence"/>
</dbReference>
<dbReference type="GO" id="GO:0005764">
    <property type="term" value="C:lysosome"/>
    <property type="evidence" value="ECO:0000250"/>
    <property type="project" value="UniProtKB"/>
</dbReference>
<dbReference type="GO" id="GO:0071986">
    <property type="term" value="C:Ragulator complex"/>
    <property type="evidence" value="ECO:0000250"/>
    <property type="project" value="UniProtKB"/>
</dbReference>
<dbReference type="GO" id="GO:0071230">
    <property type="term" value="P:cellular response to amino acid stimulus"/>
    <property type="evidence" value="ECO:0000250"/>
    <property type="project" value="UniProtKB"/>
</dbReference>
<dbReference type="GO" id="GO:0032008">
    <property type="term" value="P:positive regulation of TOR signaling"/>
    <property type="evidence" value="ECO:0000250"/>
    <property type="project" value="UniProtKB"/>
</dbReference>
<dbReference type="GO" id="GO:0061462">
    <property type="term" value="P:protein localization to lysosome"/>
    <property type="evidence" value="ECO:0000250"/>
    <property type="project" value="UniProtKB"/>
</dbReference>
<dbReference type="GO" id="GO:0008361">
    <property type="term" value="P:regulation of cell size"/>
    <property type="evidence" value="ECO:0000250"/>
    <property type="project" value="UniProtKB"/>
</dbReference>
<dbReference type="InterPro" id="IPR034601">
    <property type="entry name" value="LAMTOR4"/>
</dbReference>
<dbReference type="PANTHER" id="PTHR33967">
    <property type="entry name" value="RAGULATOR COMPLEX PROTEIN LAMTOR4"/>
    <property type="match status" value="1"/>
</dbReference>
<dbReference type="PANTHER" id="PTHR33967:SF1">
    <property type="entry name" value="RAGULATOR COMPLEX PROTEIN LAMTOR4"/>
    <property type="match status" value="1"/>
</dbReference>
<dbReference type="SUPFAM" id="SSF103196">
    <property type="entry name" value="Roadblock/LC7 domain"/>
    <property type="match status" value="1"/>
</dbReference>
<comment type="function">
    <text evidence="1">Regulator of the TOR pathway, a signaling cascade that promotes cell growth in response to growth factors, energy levels, and amino acids. As part of the Ragulator complex, may activate the TOR signaling cascade in response to amino acids (By similarity).</text>
</comment>
<comment type="subunit">
    <text evidence="1">Part of the Ragulator complex.</text>
</comment>
<comment type="subcellular location">
    <subcellularLocation>
        <location evidence="1">Lysosome</location>
    </subcellularLocation>
</comment>
<comment type="similarity">
    <text evidence="2">Belongs to the LAMTOR4 family.</text>
</comment>
<feature type="chain" id="PRO_0000366120" description="Ragulator complex protein LAMTOR4 homolog">
    <location>
        <begin position="1"/>
        <end position="95"/>
    </location>
</feature>
<organism>
    <name type="scientific">Nematostella vectensis</name>
    <name type="common">Starlet sea anemone</name>
    <dbReference type="NCBI Taxonomy" id="45351"/>
    <lineage>
        <taxon>Eukaryota</taxon>
        <taxon>Metazoa</taxon>
        <taxon>Cnidaria</taxon>
        <taxon>Anthozoa</taxon>
        <taxon>Hexacorallia</taxon>
        <taxon>Actiniaria</taxon>
        <taxon>Edwardsiidae</taxon>
        <taxon>Nematostella</taxon>
    </lineage>
</organism>
<evidence type="ECO:0000250" key="1"/>
<evidence type="ECO:0000305" key="2"/>
<gene>
    <name type="ORF">v1g232793</name>
</gene>
<accession>A7S6M8</accession>
<name>LTOR4_NEMVE</name>
<reference key="1">
    <citation type="journal article" date="2007" name="Science">
        <title>Sea anemone genome reveals ancestral eumetazoan gene repertoire and genomic organization.</title>
        <authorList>
            <person name="Putnam N.H."/>
            <person name="Srivastava M."/>
            <person name="Hellsten U."/>
            <person name="Dirks B."/>
            <person name="Chapman J."/>
            <person name="Salamov A."/>
            <person name="Terry A."/>
            <person name="Shapiro H."/>
            <person name="Lindquist E."/>
            <person name="Kapitonov V.V."/>
            <person name="Jurka J."/>
            <person name="Genikhovich G."/>
            <person name="Grigoriev I.V."/>
            <person name="Lucas S.M."/>
            <person name="Steele R.E."/>
            <person name="Finnerty J.R."/>
            <person name="Technau U."/>
            <person name="Martindale M.Q."/>
            <person name="Rokhsar D.S."/>
        </authorList>
    </citation>
    <scope>NUCLEOTIDE SEQUENCE [LARGE SCALE GENOMIC DNA]</scope>
    <source>
        <strain>CH2 X CH6</strain>
    </source>
</reference>